<comment type="function">
    <text evidence="2">Peptidoglycan polymerase that is essential for cell division.</text>
</comment>
<comment type="catalytic activity">
    <reaction evidence="2">
        <text>[GlcNAc-(1-&gt;4)-Mur2Ac(oyl-L-Ala-gamma-D-Glu-L-Lys-D-Ala-D-Ala)](n)-di-trans,octa-cis-undecaprenyl diphosphate + beta-D-GlcNAc-(1-&gt;4)-Mur2Ac(oyl-L-Ala-gamma-D-Glu-L-Lys-D-Ala-D-Ala)-di-trans,octa-cis-undecaprenyl diphosphate = [GlcNAc-(1-&gt;4)-Mur2Ac(oyl-L-Ala-gamma-D-Glu-L-Lys-D-Ala-D-Ala)](n+1)-di-trans,octa-cis-undecaprenyl diphosphate + di-trans,octa-cis-undecaprenyl diphosphate + H(+)</text>
        <dbReference type="Rhea" id="RHEA:23708"/>
        <dbReference type="Rhea" id="RHEA-COMP:9602"/>
        <dbReference type="Rhea" id="RHEA-COMP:9603"/>
        <dbReference type="ChEBI" id="CHEBI:15378"/>
        <dbReference type="ChEBI" id="CHEBI:58405"/>
        <dbReference type="ChEBI" id="CHEBI:60033"/>
        <dbReference type="ChEBI" id="CHEBI:78435"/>
        <dbReference type="EC" id="2.4.99.28"/>
    </reaction>
</comment>
<comment type="pathway">
    <text evidence="2">Cell wall biogenesis; peptidoglycan biosynthesis.</text>
</comment>
<comment type="subcellular location">
    <subcellularLocation>
        <location evidence="2">Cell inner membrane</location>
        <topology evidence="2">Multi-pass membrane protein</topology>
    </subcellularLocation>
    <text evidence="2">Localizes to the division septum.</text>
</comment>
<comment type="similarity">
    <text evidence="2">Belongs to the SEDS family. FtsW subfamily.</text>
</comment>
<keyword id="KW-0131">Cell cycle</keyword>
<keyword id="KW-0132">Cell division</keyword>
<keyword id="KW-0997">Cell inner membrane</keyword>
<keyword id="KW-1003">Cell membrane</keyword>
<keyword id="KW-0133">Cell shape</keyword>
<keyword id="KW-0961">Cell wall biogenesis/degradation</keyword>
<keyword id="KW-0328">Glycosyltransferase</keyword>
<keyword id="KW-0472">Membrane</keyword>
<keyword id="KW-0573">Peptidoglycan synthesis</keyword>
<keyword id="KW-1185">Reference proteome</keyword>
<keyword id="KW-0808">Transferase</keyword>
<keyword id="KW-0812">Transmembrane</keyword>
<keyword id="KW-1133">Transmembrane helix</keyword>
<evidence type="ECO:0000255" key="1"/>
<evidence type="ECO:0000255" key="2">
    <source>
        <dbReference type="HAMAP-Rule" id="MF_00913"/>
    </source>
</evidence>
<dbReference type="EC" id="2.4.99.28" evidence="2"/>
<dbReference type="EMBL" id="L42023">
    <property type="protein sequence ID" value="AAC22792.1"/>
    <property type="molecule type" value="Genomic_DNA"/>
</dbReference>
<dbReference type="PIR" id="C64185">
    <property type="entry name" value="C64185"/>
</dbReference>
<dbReference type="RefSeq" id="NP_439295.1">
    <property type="nucleotide sequence ID" value="NC_000907.1"/>
</dbReference>
<dbReference type="SMR" id="P45064"/>
<dbReference type="STRING" id="71421.HI_1137"/>
<dbReference type="EnsemblBacteria" id="AAC22792">
    <property type="protein sequence ID" value="AAC22792"/>
    <property type="gene ID" value="HI_1137"/>
</dbReference>
<dbReference type="KEGG" id="hin:HI_1137"/>
<dbReference type="PATRIC" id="fig|71421.8.peg.1187"/>
<dbReference type="eggNOG" id="COG0772">
    <property type="taxonomic scope" value="Bacteria"/>
</dbReference>
<dbReference type="HOGENOM" id="CLU_029243_1_1_6"/>
<dbReference type="OrthoDB" id="9768187at2"/>
<dbReference type="PhylomeDB" id="P45064"/>
<dbReference type="BioCyc" id="HINF71421:G1GJ1-1170-MONOMER"/>
<dbReference type="UniPathway" id="UPA00219"/>
<dbReference type="Proteomes" id="UP000000579">
    <property type="component" value="Chromosome"/>
</dbReference>
<dbReference type="GO" id="GO:0032153">
    <property type="term" value="C:cell division site"/>
    <property type="evidence" value="ECO:0000318"/>
    <property type="project" value="GO_Central"/>
</dbReference>
<dbReference type="GO" id="GO:0005886">
    <property type="term" value="C:plasma membrane"/>
    <property type="evidence" value="ECO:0000318"/>
    <property type="project" value="GO_Central"/>
</dbReference>
<dbReference type="GO" id="GO:0015648">
    <property type="term" value="F:lipid-linked peptidoglycan transporter activity"/>
    <property type="evidence" value="ECO:0000318"/>
    <property type="project" value="GO_Central"/>
</dbReference>
<dbReference type="GO" id="GO:0008955">
    <property type="term" value="F:peptidoglycan glycosyltransferase activity"/>
    <property type="evidence" value="ECO:0007669"/>
    <property type="project" value="UniProtKB-UniRule"/>
</dbReference>
<dbReference type="GO" id="GO:0051301">
    <property type="term" value="P:cell division"/>
    <property type="evidence" value="ECO:0000318"/>
    <property type="project" value="GO_Central"/>
</dbReference>
<dbReference type="GO" id="GO:0071555">
    <property type="term" value="P:cell wall organization"/>
    <property type="evidence" value="ECO:0007669"/>
    <property type="project" value="UniProtKB-KW"/>
</dbReference>
<dbReference type="GO" id="GO:0043093">
    <property type="term" value="P:FtsZ-dependent cytokinesis"/>
    <property type="evidence" value="ECO:0007669"/>
    <property type="project" value="UniProtKB-UniRule"/>
</dbReference>
<dbReference type="GO" id="GO:0009252">
    <property type="term" value="P:peptidoglycan biosynthetic process"/>
    <property type="evidence" value="ECO:0007669"/>
    <property type="project" value="UniProtKB-UniRule"/>
</dbReference>
<dbReference type="GO" id="GO:0008360">
    <property type="term" value="P:regulation of cell shape"/>
    <property type="evidence" value="ECO:0000318"/>
    <property type="project" value="GO_Central"/>
</dbReference>
<dbReference type="HAMAP" id="MF_00913">
    <property type="entry name" value="PGT_FtsW_proteobact"/>
    <property type="match status" value="1"/>
</dbReference>
<dbReference type="InterPro" id="IPR018365">
    <property type="entry name" value="Cell_cycle_FtsW-rel_CS"/>
</dbReference>
<dbReference type="InterPro" id="IPR013437">
    <property type="entry name" value="FtsW"/>
</dbReference>
<dbReference type="InterPro" id="IPR001182">
    <property type="entry name" value="FtsW/RodA"/>
</dbReference>
<dbReference type="NCBIfam" id="TIGR02614">
    <property type="entry name" value="ftsW"/>
    <property type="match status" value="1"/>
</dbReference>
<dbReference type="PANTHER" id="PTHR30474">
    <property type="entry name" value="CELL CYCLE PROTEIN"/>
    <property type="match status" value="1"/>
</dbReference>
<dbReference type="PANTHER" id="PTHR30474:SF2">
    <property type="entry name" value="PEPTIDOGLYCAN GLYCOSYLTRANSFERASE FTSW-RELATED"/>
    <property type="match status" value="1"/>
</dbReference>
<dbReference type="Pfam" id="PF01098">
    <property type="entry name" value="FTSW_RODA_SPOVE"/>
    <property type="match status" value="1"/>
</dbReference>
<dbReference type="PROSITE" id="PS00428">
    <property type="entry name" value="FTSW_RODA_SPOVE"/>
    <property type="match status" value="1"/>
</dbReference>
<protein>
    <recommendedName>
        <fullName evidence="2">Probable peptidoglycan glycosyltransferase FtsW</fullName>
        <shortName evidence="2">PGT</shortName>
        <ecNumber evidence="2">2.4.99.28</ecNumber>
    </recommendedName>
    <alternativeName>
        <fullName evidence="2">Cell division protein FtsW</fullName>
    </alternativeName>
    <alternativeName>
        <fullName evidence="2">Cell wall polymerase</fullName>
    </alternativeName>
    <alternativeName>
        <fullName evidence="2">Peptidoglycan polymerase</fullName>
        <shortName evidence="2">PG polymerase</shortName>
    </alternativeName>
</protein>
<organism>
    <name type="scientific">Haemophilus influenzae (strain ATCC 51907 / DSM 11121 / KW20 / Rd)</name>
    <dbReference type="NCBI Taxonomy" id="71421"/>
    <lineage>
        <taxon>Bacteria</taxon>
        <taxon>Pseudomonadati</taxon>
        <taxon>Pseudomonadota</taxon>
        <taxon>Gammaproteobacteria</taxon>
        <taxon>Pasteurellales</taxon>
        <taxon>Pasteurellaceae</taxon>
        <taxon>Haemophilus</taxon>
    </lineage>
</organism>
<gene>
    <name evidence="2" type="primary">ftsW</name>
    <name type="ordered locus">HI_1137</name>
</gene>
<proteinExistence type="inferred from homology"/>
<name>FTSW_HAEIN</name>
<feature type="chain" id="PRO_0000062704" description="Probable peptidoglycan glycosyltransferase FtsW">
    <location>
        <begin position="1"/>
        <end position="394"/>
    </location>
</feature>
<feature type="topological domain" description="Cytoplasmic" evidence="1">
    <location>
        <begin position="1"/>
        <end position="27"/>
    </location>
</feature>
<feature type="transmembrane region" description="Helical" evidence="2">
    <location>
        <begin position="28"/>
        <end position="48"/>
    </location>
</feature>
<feature type="topological domain" description="Periplasmic" evidence="1">
    <location>
        <begin position="49"/>
        <end position="66"/>
    </location>
</feature>
<feature type="transmembrane region" description="Helical" evidence="2">
    <location>
        <begin position="67"/>
        <end position="87"/>
    </location>
</feature>
<feature type="topological domain" description="Cytoplasmic" evidence="1">
    <location>
        <begin position="88"/>
        <end position="93"/>
    </location>
</feature>
<feature type="transmembrane region" description="Helical" evidence="2">
    <location>
        <begin position="94"/>
        <end position="114"/>
    </location>
</feature>
<feature type="topological domain" description="Periplasmic" evidence="1">
    <location>
        <begin position="115"/>
        <end position="120"/>
    </location>
</feature>
<feature type="transmembrane region" description="Helical" evidence="2">
    <location>
        <begin position="121"/>
        <end position="141"/>
    </location>
</feature>
<feature type="topological domain" description="Cytoplasmic" evidence="1">
    <location>
        <begin position="142"/>
        <end position="155"/>
    </location>
</feature>
<feature type="transmembrane region" description="Helical" evidence="2">
    <location>
        <begin position="156"/>
        <end position="176"/>
    </location>
</feature>
<feature type="transmembrane region" description="Helical" evidence="2">
    <location>
        <begin position="177"/>
        <end position="197"/>
    </location>
</feature>
<feature type="topological domain" description="Cytoplasmic" evidence="1">
    <location>
        <position position="198"/>
    </location>
</feature>
<feature type="transmembrane region" description="Helical" evidence="2">
    <location>
        <begin position="199"/>
        <end position="219"/>
    </location>
</feature>
<feature type="topological domain" description="Periplasmic" evidence="1">
    <location>
        <begin position="220"/>
        <end position="277"/>
    </location>
</feature>
<feature type="transmembrane region" description="Helical" evidence="2">
    <location>
        <begin position="278"/>
        <end position="298"/>
    </location>
</feature>
<feature type="topological domain" description="Cytoplasmic" evidence="1">
    <location>
        <begin position="299"/>
        <end position="322"/>
    </location>
</feature>
<feature type="transmembrane region" description="Helical" evidence="2">
    <location>
        <begin position="323"/>
        <end position="343"/>
    </location>
</feature>
<feature type="topological domain" description="Periplasmic" evidence="1">
    <location>
        <begin position="344"/>
        <end position="353"/>
    </location>
</feature>
<feature type="transmembrane region" description="Helical" evidence="2">
    <location>
        <begin position="354"/>
        <end position="374"/>
    </location>
</feature>
<feature type="topological domain" description="Cytoplasmic" evidence="1">
    <location>
        <begin position="375"/>
        <end position="394"/>
    </location>
</feature>
<sequence>MEFLQNIKKNYDEWTRITPQGLLYDRALFWLFVILLLIGLVAVTSASIPYSSRLFNDPFYFAKRDAIYVLLSLLTCYISLQISSSQWEKWHAKIFLFSVILLLLVPFIGTSVNGAKRWISLGILNFQPAEFAKLALTCFLASYFTRRYDEVRSRHVSIFKPFIVMLVLGCFLLLQPDLGSTVVLFIIMSGMLFIVGAKILQFVGLIALGGILFVWLVLTASYRLKRFIGFLEPFKEPYGTGFQLTNSLIAFGRGEITGEGLGNSIQKLDYLPEAHTDFIMAIIGEEFGFIGILIVILLLGLLIFRAMKIGRESLMLEQRFRGFFALGIGFWIFFQGFVNLGMALGMLPTKGLTFPLVSYGGSSIIIMSATIGILLRIDHENRLFRIGQARLRDD</sequence>
<accession>P45064</accession>
<reference key="1">
    <citation type="journal article" date="1995" name="Science">
        <title>Whole-genome random sequencing and assembly of Haemophilus influenzae Rd.</title>
        <authorList>
            <person name="Fleischmann R.D."/>
            <person name="Adams M.D."/>
            <person name="White O."/>
            <person name="Clayton R.A."/>
            <person name="Kirkness E.F."/>
            <person name="Kerlavage A.R."/>
            <person name="Bult C.J."/>
            <person name="Tomb J.-F."/>
            <person name="Dougherty B.A."/>
            <person name="Merrick J.M."/>
            <person name="McKenney K."/>
            <person name="Sutton G.G."/>
            <person name="FitzHugh W."/>
            <person name="Fields C.A."/>
            <person name="Gocayne J.D."/>
            <person name="Scott J.D."/>
            <person name="Shirley R."/>
            <person name="Liu L.-I."/>
            <person name="Glodek A."/>
            <person name="Kelley J.M."/>
            <person name="Weidman J.F."/>
            <person name="Phillips C.A."/>
            <person name="Spriggs T."/>
            <person name="Hedblom E."/>
            <person name="Cotton M.D."/>
            <person name="Utterback T.R."/>
            <person name="Hanna M.C."/>
            <person name="Nguyen D.T."/>
            <person name="Saudek D.M."/>
            <person name="Brandon R.C."/>
            <person name="Fine L.D."/>
            <person name="Fritchman J.L."/>
            <person name="Fuhrmann J.L."/>
            <person name="Geoghagen N.S.M."/>
            <person name="Gnehm C.L."/>
            <person name="McDonald L.A."/>
            <person name="Small K.V."/>
            <person name="Fraser C.M."/>
            <person name="Smith H.O."/>
            <person name="Venter J.C."/>
        </authorList>
    </citation>
    <scope>NUCLEOTIDE SEQUENCE [LARGE SCALE GENOMIC DNA]</scope>
    <source>
        <strain>ATCC 51907 / DSM 11121 / KW20 / Rd</strain>
    </source>
</reference>